<keyword id="KW-0963">Cytoplasm</keyword>
<keyword id="KW-0342">GTP-binding</keyword>
<keyword id="KW-0378">Hydrolase</keyword>
<keyword id="KW-0460">Magnesium</keyword>
<keyword id="KW-0479">Metal-binding</keyword>
<keyword id="KW-0547">Nucleotide-binding</keyword>
<reference key="1">
    <citation type="journal article" date="2008" name="BMC Genomics">
        <title>The genome sequence of the fish pathogen Aliivibrio salmonicida strain LFI1238 shows extensive evidence of gene decay.</title>
        <authorList>
            <person name="Hjerde E."/>
            <person name="Lorentzen M.S."/>
            <person name="Holden M.T."/>
            <person name="Seeger K."/>
            <person name="Paulsen S."/>
            <person name="Bason N."/>
            <person name="Churcher C."/>
            <person name="Harris D."/>
            <person name="Norbertczak H."/>
            <person name="Quail M.A."/>
            <person name="Sanders S."/>
            <person name="Thurston S."/>
            <person name="Parkhill J."/>
            <person name="Willassen N.P."/>
            <person name="Thomson N.R."/>
        </authorList>
    </citation>
    <scope>NUCLEOTIDE SEQUENCE [LARGE SCALE GENOMIC DNA]</scope>
    <source>
        <strain>LFI1238</strain>
    </source>
</reference>
<organism>
    <name type="scientific">Aliivibrio salmonicida (strain LFI1238)</name>
    <name type="common">Vibrio salmonicida (strain LFI1238)</name>
    <dbReference type="NCBI Taxonomy" id="316275"/>
    <lineage>
        <taxon>Bacteria</taxon>
        <taxon>Pseudomonadati</taxon>
        <taxon>Pseudomonadota</taxon>
        <taxon>Gammaproteobacteria</taxon>
        <taxon>Vibrionales</taxon>
        <taxon>Vibrionaceae</taxon>
        <taxon>Aliivibrio</taxon>
    </lineage>
</organism>
<feature type="chain" id="PRO_0000385683" description="GTPase Obg">
    <location>
        <begin position="1"/>
        <end position="392"/>
    </location>
</feature>
<feature type="domain" description="Obg" evidence="2">
    <location>
        <begin position="1"/>
        <end position="159"/>
    </location>
</feature>
<feature type="domain" description="OBG-type G" evidence="1">
    <location>
        <begin position="160"/>
        <end position="333"/>
    </location>
</feature>
<feature type="region of interest" description="Disordered" evidence="3">
    <location>
        <begin position="364"/>
        <end position="392"/>
    </location>
</feature>
<feature type="compositionally biased region" description="Acidic residues" evidence="3">
    <location>
        <begin position="370"/>
        <end position="384"/>
    </location>
</feature>
<feature type="binding site" evidence="1">
    <location>
        <begin position="166"/>
        <end position="173"/>
    </location>
    <ligand>
        <name>GTP</name>
        <dbReference type="ChEBI" id="CHEBI:37565"/>
    </ligand>
</feature>
<feature type="binding site" evidence="1">
    <location>
        <position position="173"/>
    </location>
    <ligand>
        <name>Mg(2+)</name>
        <dbReference type="ChEBI" id="CHEBI:18420"/>
    </ligand>
</feature>
<feature type="binding site" evidence="1">
    <location>
        <begin position="191"/>
        <end position="195"/>
    </location>
    <ligand>
        <name>GTP</name>
        <dbReference type="ChEBI" id="CHEBI:37565"/>
    </ligand>
</feature>
<feature type="binding site" evidence="1">
    <location>
        <position position="193"/>
    </location>
    <ligand>
        <name>Mg(2+)</name>
        <dbReference type="ChEBI" id="CHEBI:18420"/>
    </ligand>
</feature>
<feature type="binding site" evidence="1">
    <location>
        <begin position="213"/>
        <end position="216"/>
    </location>
    <ligand>
        <name>GTP</name>
        <dbReference type="ChEBI" id="CHEBI:37565"/>
    </ligand>
</feature>
<feature type="binding site" evidence="1">
    <location>
        <begin position="283"/>
        <end position="286"/>
    </location>
    <ligand>
        <name>GTP</name>
        <dbReference type="ChEBI" id="CHEBI:37565"/>
    </ligand>
</feature>
<feature type="binding site" evidence="1">
    <location>
        <begin position="314"/>
        <end position="316"/>
    </location>
    <ligand>
        <name>GTP</name>
        <dbReference type="ChEBI" id="CHEBI:37565"/>
    </ligand>
</feature>
<protein>
    <recommendedName>
        <fullName evidence="1">GTPase Obg</fullName>
        <ecNumber evidence="1">3.6.5.-</ecNumber>
    </recommendedName>
    <alternativeName>
        <fullName evidence="1">GTP-binding protein Obg</fullName>
    </alternativeName>
</protein>
<dbReference type="EC" id="3.6.5.-" evidence="1"/>
<dbReference type="EMBL" id="FM178379">
    <property type="protein sequence ID" value="CAQ78048.1"/>
    <property type="molecule type" value="Genomic_DNA"/>
</dbReference>
<dbReference type="SMR" id="B6EL43"/>
<dbReference type="KEGG" id="vsa:VSAL_I0363"/>
<dbReference type="eggNOG" id="COG0536">
    <property type="taxonomic scope" value="Bacteria"/>
</dbReference>
<dbReference type="HOGENOM" id="CLU_011747_2_0_6"/>
<dbReference type="Proteomes" id="UP000001730">
    <property type="component" value="Chromosome 1"/>
</dbReference>
<dbReference type="GO" id="GO:0005737">
    <property type="term" value="C:cytoplasm"/>
    <property type="evidence" value="ECO:0007669"/>
    <property type="project" value="UniProtKB-SubCell"/>
</dbReference>
<dbReference type="GO" id="GO:0005525">
    <property type="term" value="F:GTP binding"/>
    <property type="evidence" value="ECO:0007669"/>
    <property type="project" value="UniProtKB-UniRule"/>
</dbReference>
<dbReference type="GO" id="GO:0003924">
    <property type="term" value="F:GTPase activity"/>
    <property type="evidence" value="ECO:0007669"/>
    <property type="project" value="UniProtKB-UniRule"/>
</dbReference>
<dbReference type="GO" id="GO:0000287">
    <property type="term" value="F:magnesium ion binding"/>
    <property type="evidence" value="ECO:0007669"/>
    <property type="project" value="InterPro"/>
</dbReference>
<dbReference type="GO" id="GO:0042254">
    <property type="term" value="P:ribosome biogenesis"/>
    <property type="evidence" value="ECO:0007669"/>
    <property type="project" value="UniProtKB-UniRule"/>
</dbReference>
<dbReference type="CDD" id="cd01898">
    <property type="entry name" value="Obg"/>
    <property type="match status" value="1"/>
</dbReference>
<dbReference type="FunFam" id="2.70.210.12:FF:000001">
    <property type="entry name" value="GTPase Obg"/>
    <property type="match status" value="1"/>
</dbReference>
<dbReference type="Gene3D" id="2.70.210.12">
    <property type="entry name" value="GTP1/OBG domain"/>
    <property type="match status" value="1"/>
</dbReference>
<dbReference type="Gene3D" id="3.40.50.300">
    <property type="entry name" value="P-loop containing nucleotide triphosphate hydrolases"/>
    <property type="match status" value="1"/>
</dbReference>
<dbReference type="HAMAP" id="MF_01454">
    <property type="entry name" value="GTPase_Obg"/>
    <property type="match status" value="1"/>
</dbReference>
<dbReference type="InterPro" id="IPR031167">
    <property type="entry name" value="G_OBG"/>
</dbReference>
<dbReference type="InterPro" id="IPR006073">
    <property type="entry name" value="GTP-bd"/>
</dbReference>
<dbReference type="InterPro" id="IPR014100">
    <property type="entry name" value="GTP-bd_Obg/CgtA"/>
</dbReference>
<dbReference type="InterPro" id="IPR006074">
    <property type="entry name" value="GTP1-OBG_CS"/>
</dbReference>
<dbReference type="InterPro" id="IPR006169">
    <property type="entry name" value="GTP1_OBG_dom"/>
</dbReference>
<dbReference type="InterPro" id="IPR036726">
    <property type="entry name" value="GTP1_OBG_dom_sf"/>
</dbReference>
<dbReference type="InterPro" id="IPR045086">
    <property type="entry name" value="OBG_GTPase"/>
</dbReference>
<dbReference type="InterPro" id="IPR027417">
    <property type="entry name" value="P-loop_NTPase"/>
</dbReference>
<dbReference type="NCBIfam" id="TIGR02729">
    <property type="entry name" value="Obg_CgtA"/>
    <property type="match status" value="1"/>
</dbReference>
<dbReference type="NCBIfam" id="NF008955">
    <property type="entry name" value="PRK12297.1"/>
    <property type="match status" value="1"/>
</dbReference>
<dbReference type="NCBIfam" id="NF008956">
    <property type="entry name" value="PRK12299.1"/>
    <property type="match status" value="1"/>
</dbReference>
<dbReference type="PANTHER" id="PTHR11702">
    <property type="entry name" value="DEVELOPMENTALLY REGULATED GTP-BINDING PROTEIN-RELATED"/>
    <property type="match status" value="1"/>
</dbReference>
<dbReference type="PANTHER" id="PTHR11702:SF31">
    <property type="entry name" value="MITOCHONDRIAL RIBOSOME-ASSOCIATED GTPASE 2"/>
    <property type="match status" value="1"/>
</dbReference>
<dbReference type="Pfam" id="PF01018">
    <property type="entry name" value="GTP1_OBG"/>
    <property type="match status" value="1"/>
</dbReference>
<dbReference type="Pfam" id="PF01926">
    <property type="entry name" value="MMR_HSR1"/>
    <property type="match status" value="1"/>
</dbReference>
<dbReference type="PIRSF" id="PIRSF002401">
    <property type="entry name" value="GTP_bd_Obg/CgtA"/>
    <property type="match status" value="1"/>
</dbReference>
<dbReference type="PRINTS" id="PR00326">
    <property type="entry name" value="GTP1OBG"/>
</dbReference>
<dbReference type="SUPFAM" id="SSF82051">
    <property type="entry name" value="Obg GTP-binding protein N-terminal domain"/>
    <property type="match status" value="1"/>
</dbReference>
<dbReference type="SUPFAM" id="SSF52540">
    <property type="entry name" value="P-loop containing nucleoside triphosphate hydrolases"/>
    <property type="match status" value="1"/>
</dbReference>
<dbReference type="PROSITE" id="PS51710">
    <property type="entry name" value="G_OBG"/>
    <property type="match status" value="1"/>
</dbReference>
<dbReference type="PROSITE" id="PS00905">
    <property type="entry name" value="GTP1_OBG"/>
    <property type="match status" value="1"/>
</dbReference>
<dbReference type="PROSITE" id="PS51883">
    <property type="entry name" value="OBG"/>
    <property type="match status" value="1"/>
</dbReference>
<name>OBG_ALISL</name>
<evidence type="ECO:0000255" key="1">
    <source>
        <dbReference type="HAMAP-Rule" id="MF_01454"/>
    </source>
</evidence>
<evidence type="ECO:0000255" key="2">
    <source>
        <dbReference type="PROSITE-ProRule" id="PRU01231"/>
    </source>
</evidence>
<evidence type="ECO:0000256" key="3">
    <source>
        <dbReference type="SAM" id="MobiDB-lite"/>
    </source>
</evidence>
<accession>B6EL43</accession>
<sequence>MKFVDEATIKVDAGDGGNGTVSFWREKFVAKGGPDGGDGGDGGDVYLEADENLNTLIDYRFNRFYDAERGKNGGGTNSTGRRGEDITLKVPVGTRAIDIDTGEKVAELMAHGMKIMVAKGGWHGLGNTRFKSSVNRAPRQKTMGTKGEVRELRLELLLLADVGMLGLPNAGKSTFIRAVSAAKPKVADYPFTTLIPSLGVVRARGNKSFVIADIPGLIEGAAEGAGLGVRFLKHLERCRVLLHVIDILPIDGSDPVQNALTIIDELERYSEKVAGKPRWLLFNKTDLLLEAEADEKIAEILEALAWEGAHFKIAAVSRTGTQEVCNELSDFMDTLPKEIMTDEEKAALKVDFMWDDYHKDAMSGKNVVTEDGDDDDDWDDEEDDGHVIYARD</sequence>
<comment type="function">
    <text evidence="1">An essential GTPase which binds GTP, GDP and possibly (p)ppGpp with moderate affinity, with high nucleotide exchange rates and a fairly low GTP hydrolysis rate. Plays a role in control of the cell cycle, stress response, ribosome biogenesis and in those bacteria that undergo differentiation, in morphogenesis control.</text>
</comment>
<comment type="cofactor">
    <cofactor evidence="1">
        <name>Mg(2+)</name>
        <dbReference type="ChEBI" id="CHEBI:18420"/>
    </cofactor>
</comment>
<comment type="subunit">
    <text evidence="1">Monomer.</text>
</comment>
<comment type="subcellular location">
    <subcellularLocation>
        <location evidence="1">Cytoplasm</location>
    </subcellularLocation>
</comment>
<comment type="similarity">
    <text evidence="1">Belongs to the TRAFAC class OBG-HflX-like GTPase superfamily. OBG GTPase family.</text>
</comment>
<proteinExistence type="inferred from homology"/>
<gene>
    <name evidence="1" type="primary">obg</name>
    <name type="ordered locus">VSAL_I0363</name>
</gene>